<sequence>MSFEHPGDGDSRYYLLKIAHEQFGCAPGELSEEQLQQAERIIGRQKHIEDAVLRCPDAAGVVIPASQIEEAWTQIANRYESAEALQQALDAQGLERVGMRAMLARELKVQAVLDCICAGLPEISDTDVSLYYFNHAEQFKVPARHKARHILVTINEDFPENTREAARTRIEAILKRLRGKPERFAEQAAKHSECPTAMQGGLLGEVVPGTLYPELDACLFQMAQGQLSPVLESPIGFHVLFCESVSTARQLTLEEILPRLRDRLQLRQRKAYQRKWLESLLQQNATLENLAHG</sequence>
<organism>
    <name type="scientific">Azotobacter chroococcum mcd 1</name>
    <dbReference type="NCBI Taxonomy" id="355"/>
    <lineage>
        <taxon>Bacteria</taxon>
        <taxon>Pseudomonadati</taxon>
        <taxon>Pseudomonadota</taxon>
        <taxon>Gammaproteobacteria</taxon>
        <taxon>Pseudomonadales</taxon>
        <taxon>Pseudomonadaceae</taxon>
        <taxon>Azotobacter</taxon>
    </lineage>
</organism>
<protein>
    <recommendedName>
        <fullName>Putative peptidyl-prolyl cis-trans isomerase NifM</fullName>
        <shortName>PPIase NifM</shortName>
        <ecNumber>5.2.1.8</ecNumber>
    </recommendedName>
    <alternativeName>
        <fullName>Rotamase NifM</fullName>
    </alternativeName>
</protein>
<comment type="function">
    <text>Required for the activation and stabilization of the iron-component (NifH) of nitrogenase. Probable PPIase.</text>
</comment>
<comment type="catalytic activity">
    <reaction>
        <text>[protein]-peptidylproline (omega=180) = [protein]-peptidylproline (omega=0)</text>
        <dbReference type="Rhea" id="RHEA:16237"/>
        <dbReference type="Rhea" id="RHEA-COMP:10747"/>
        <dbReference type="Rhea" id="RHEA-COMP:10748"/>
        <dbReference type="ChEBI" id="CHEBI:83833"/>
        <dbReference type="ChEBI" id="CHEBI:83834"/>
        <dbReference type="EC" id="5.2.1.8"/>
    </reaction>
</comment>
<comment type="similarity">
    <text evidence="2">Belongs to the PpiC/parvulin rotamase family.</text>
</comment>
<feature type="chain" id="PRO_0000193427" description="Putative peptidyl-prolyl cis-trans isomerase NifM">
    <location>
        <begin position="1"/>
        <end position="293"/>
    </location>
</feature>
<feature type="domain" description="PpiC" evidence="1">
    <location>
        <begin position="142"/>
        <end position="244"/>
    </location>
</feature>
<gene>
    <name type="primary">nifM</name>
</gene>
<reference key="1">
    <citation type="journal article" date="1991" name="J. Bacteriol.">
        <title>Nucleotide sequence and genetic analysis of the Azotobacter chroococcum nifUSVWZM gene cluster, including a new gene (nifP) which encodes a serine acetyltransferase.</title>
        <authorList>
            <person name="Evans D.J."/>
            <person name="Jones R."/>
            <person name="Woodley P.R."/>
            <person name="Wilborn J.R."/>
            <person name="Robson R.L."/>
        </authorList>
    </citation>
    <scope>NUCLEOTIDE SEQUENCE [GENOMIC DNA]</scope>
</reference>
<accession>P23119</accession>
<keyword id="KW-0413">Isomerase</keyword>
<keyword id="KW-0535">Nitrogen fixation</keyword>
<keyword id="KW-0697">Rotamase</keyword>
<proteinExistence type="inferred from homology"/>
<dbReference type="EC" id="5.2.1.8"/>
<dbReference type="EMBL" id="M60090">
    <property type="protein sequence ID" value="AAA22166.1"/>
    <property type="molecule type" value="Genomic_DNA"/>
</dbReference>
<dbReference type="PIR" id="H43706">
    <property type="entry name" value="H43706"/>
</dbReference>
<dbReference type="SMR" id="P23119"/>
<dbReference type="GO" id="GO:0003755">
    <property type="term" value="F:peptidyl-prolyl cis-trans isomerase activity"/>
    <property type="evidence" value="ECO:0007669"/>
    <property type="project" value="UniProtKB-KW"/>
</dbReference>
<dbReference type="GO" id="GO:0009399">
    <property type="term" value="P:nitrogen fixation"/>
    <property type="evidence" value="ECO:0007669"/>
    <property type="project" value="UniProtKB-KW"/>
</dbReference>
<dbReference type="Gene3D" id="3.10.50.40">
    <property type="match status" value="1"/>
</dbReference>
<dbReference type="InterPro" id="IPR014282">
    <property type="entry name" value="Nitrogen_fix_NifM"/>
</dbReference>
<dbReference type="InterPro" id="IPR046357">
    <property type="entry name" value="PPIase_dom_sf"/>
</dbReference>
<dbReference type="InterPro" id="IPR000297">
    <property type="entry name" value="PPIase_PpiC"/>
</dbReference>
<dbReference type="InterPro" id="IPR023058">
    <property type="entry name" value="PPIase_PpiC_CS"/>
</dbReference>
<dbReference type="InterPro" id="IPR050245">
    <property type="entry name" value="PrsA_foldase"/>
</dbReference>
<dbReference type="InterPro" id="IPR027304">
    <property type="entry name" value="Trigger_fact/SurA_dom_sf"/>
</dbReference>
<dbReference type="NCBIfam" id="TIGR02933">
    <property type="entry name" value="nifM_nitrog"/>
    <property type="match status" value="1"/>
</dbReference>
<dbReference type="PANTHER" id="PTHR47245:SF2">
    <property type="entry name" value="PEPTIDYL-PROLYL CIS-TRANS ISOMERASE HP_0175-RELATED"/>
    <property type="match status" value="1"/>
</dbReference>
<dbReference type="PANTHER" id="PTHR47245">
    <property type="entry name" value="PEPTIDYLPROLYL ISOMERASE"/>
    <property type="match status" value="1"/>
</dbReference>
<dbReference type="Pfam" id="PF00639">
    <property type="entry name" value="Rotamase"/>
    <property type="match status" value="1"/>
</dbReference>
<dbReference type="SUPFAM" id="SSF54534">
    <property type="entry name" value="FKBP-like"/>
    <property type="match status" value="1"/>
</dbReference>
<dbReference type="SUPFAM" id="SSF109998">
    <property type="entry name" value="Triger factor/SurA peptide-binding domain-like"/>
    <property type="match status" value="1"/>
</dbReference>
<dbReference type="PROSITE" id="PS01096">
    <property type="entry name" value="PPIC_PPIASE_1"/>
    <property type="match status" value="1"/>
</dbReference>
<dbReference type="PROSITE" id="PS50198">
    <property type="entry name" value="PPIC_PPIASE_2"/>
    <property type="match status" value="1"/>
</dbReference>
<evidence type="ECO:0000255" key="1">
    <source>
        <dbReference type="PROSITE-ProRule" id="PRU00278"/>
    </source>
</evidence>
<evidence type="ECO:0000305" key="2"/>
<name>NIFM_AZOCH</name>